<name>RL33_SHEB8</name>
<evidence type="ECO:0000255" key="1">
    <source>
        <dbReference type="HAMAP-Rule" id="MF_00294"/>
    </source>
</evidence>
<evidence type="ECO:0000305" key="2"/>
<accession>A6WIA8</accession>
<organism>
    <name type="scientific">Shewanella baltica (strain OS185)</name>
    <dbReference type="NCBI Taxonomy" id="402882"/>
    <lineage>
        <taxon>Bacteria</taxon>
        <taxon>Pseudomonadati</taxon>
        <taxon>Pseudomonadota</taxon>
        <taxon>Gammaproteobacteria</taxon>
        <taxon>Alteromonadales</taxon>
        <taxon>Shewanellaceae</taxon>
        <taxon>Shewanella</taxon>
    </lineage>
</organism>
<keyword id="KW-0687">Ribonucleoprotein</keyword>
<keyword id="KW-0689">Ribosomal protein</keyword>
<protein>
    <recommendedName>
        <fullName evidence="1">Large ribosomal subunit protein bL33</fullName>
    </recommendedName>
    <alternativeName>
        <fullName evidence="2">50S ribosomal protein L33</fullName>
    </alternativeName>
</protein>
<feature type="chain" id="PRO_0000356654" description="Large ribosomal subunit protein bL33">
    <location>
        <begin position="1"/>
        <end position="57"/>
    </location>
</feature>
<comment type="similarity">
    <text evidence="1">Belongs to the bacterial ribosomal protein bL33 family.</text>
</comment>
<sequence length="57" mass="6733">MAKAKGNREKIKLVSTAKTGHFYTTEKNKRNMPEKMEIKKFDPVIRQHVIYKEAKIK</sequence>
<reference key="1">
    <citation type="submission" date="2007-07" db="EMBL/GenBank/DDBJ databases">
        <title>Complete sequence of chromosome of Shewanella baltica OS185.</title>
        <authorList>
            <consortium name="US DOE Joint Genome Institute"/>
            <person name="Copeland A."/>
            <person name="Lucas S."/>
            <person name="Lapidus A."/>
            <person name="Barry K."/>
            <person name="Glavina del Rio T."/>
            <person name="Dalin E."/>
            <person name="Tice H."/>
            <person name="Pitluck S."/>
            <person name="Sims D."/>
            <person name="Brettin T."/>
            <person name="Bruce D."/>
            <person name="Detter J.C."/>
            <person name="Han C."/>
            <person name="Schmutz J."/>
            <person name="Larimer F."/>
            <person name="Land M."/>
            <person name="Hauser L."/>
            <person name="Kyrpides N."/>
            <person name="Mikhailova N."/>
            <person name="Brettar I."/>
            <person name="Rodrigues J."/>
            <person name="Konstantinidis K."/>
            <person name="Tiedje J."/>
            <person name="Richardson P."/>
        </authorList>
    </citation>
    <scope>NUCLEOTIDE SEQUENCE [LARGE SCALE GENOMIC DNA]</scope>
    <source>
        <strain>OS185</strain>
    </source>
</reference>
<gene>
    <name evidence="1" type="primary">rpmG</name>
    <name type="ordered locus">Shew185_0378</name>
</gene>
<dbReference type="EMBL" id="CP000753">
    <property type="protein sequence ID" value="ABS06547.1"/>
    <property type="molecule type" value="Genomic_DNA"/>
</dbReference>
<dbReference type="RefSeq" id="WP_006079871.1">
    <property type="nucleotide sequence ID" value="NC_009665.1"/>
</dbReference>
<dbReference type="SMR" id="A6WIA8"/>
<dbReference type="GeneID" id="94729699"/>
<dbReference type="KEGG" id="sbm:Shew185_0378"/>
<dbReference type="HOGENOM" id="CLU_190949_1_1_6"/>
<dbReference type="GO" id="GO:0022625">
    <property type="term" value="C:cytosolic large ribosomal subunit"/>
    <property type="evidence" value="ECO:0007669"/>
    <property type="project" value="TreeGrafter"/>
</dbReference>
<dbReference type="GO" id="GO:0003735">
    <property type="term" value="F:structural constituent of ribosome"/>
    <property type="evidence" value="ECO:0007669"/>
    <property type="project" value="InterPro"/>
</dbReference>
<dbReference type="GO" id="GO:0006412">
    <property type="term" value="P:translation"/>
    <property type="evidence" value="ECO:0007669"/>
    <property type="project" value="UniProtKB-UniRule"/>
</dbReference>
<dbReference type="FunFam" id="2.20.28.120:FF:000001">
    <property type="entry name" value="50S ribosomal protein L33"/>
    <property type="match status" value="1"/>
</dbReference>
<dbReference type="Gene3D" id="2.20.28.120">
    <property type="entry name" value="Ribosomal protein L33"/>
    <property type="match status" value="1"/>
</dbReference>
<dbReference type="HAMAP" id="MF_00294">
    <property type="entry name" value="Ribosomal_bL33"/>
    <property type="match status" value="1"/>
</dbReference>
<dbReference type="InterPro" id="IPR001705">
    <property type="entry name" value="Ribosomal_bL33"/>
</dbReference>
<dbReference type="InterPro" id="IPR018264">
    <property type="entry name" value="Ribosomal_bL33_CS"/>
</dbReference>
<dbReference type="InterPro" id="IPR038584">
    <property type="entry name" value="Ribosomal_bL33_sf"/>
</dbReference>
<dbReference type="InterPro" id="IPR011332">
    <property type="entry name" value="Ribosomal_zn-bd"/>
</dbReference>
<dbReference type="NCBIfam" id="NF001860">
    <property type="entry name" value="PRK00595.1"/>
    <property type="match status" value="1"/>
</dbReference>
<dbReference type="NCBIfam" id="TIGR01023">
    <property type="entry name" value="rpmG_bact"/>
    <property type="match status" value="1"/>
</dbReference>
<dbReference type="PANTHER" id="PTHR15238">
    <property type="entry name" value="54S RIBOSOMAL PROTEIN L39, MITOCHONDRIAL"/>
    <property type="match status" value="1"/>
</dbReference>
<dbReference type="PANTHER" id="PTHR15238:SF1">
    <property type="entry name" value="LARGE RIBOSOMAL SUBUNIT PROTEIN BL33M"/>
    <property type="match status" value="1"/>
</dbReference>
<dbReference type="Pfam" id="PF00471">
    <property type="entry name" value="Ribosomal_L33"/>
    <property type="match status" value="1"/>
</dbReference>
<dbReference type="SUPFAM" id="SSF57829">
    <property type="entry name" value="Zn-binding ribosomal proteins"/>
    <property type="match status" value="1"/>
</dbReference>
<dbReference type="PROSITE" id="PS00582">
    <property type="entry name" value="RIBOSOMAL_L33"/>
    <property type="match status" value="1"/>
</dbReference>
<proteinExistence type="inferred from homology"/>